<evidence type="ECO:0000255" key="1">
    <source>
        <dbReference type="HAMAP-Rule" id="MF_00332"/>
    </source>
</evidence>
<evidence type="ECO:0000256" key="2">
    <source>
        <dbReference type="SAM" id="MobiDB-lite"/>
    </source>
</evidence>
<keyword id="KW-0067">ATP-binding</keyword>
<keyword id="KW-0143">Chaperone</keyword>
<keyword id="KW-0547">Nucleotide-binding</keyword>
<keyword id="KW-0597">Phosphoprotein</keyword>
<keyword id="KW-0346">Stress response</keyword>
<comment type="function">
    <text evidence="1">Acts as a chaperone.</text>
</comment>
<comment type="induction">
    <text evidence="1">By stress conditions e.g. heat shock.</text>
</comment>
<comment type="similarity">
    <text evidence="1">Belongs to the heat shock protein 70 family.</text>
</comment>
<name>DNAK_SODGM</name>
<reference key="1">
    <citation type="journal article" date="2006" name="Genome Res.">
        <title>Massive genome erosion and functional adaptations provide insights into the symbiotic lifestyle of Sodalis glossinidius in the tsetse host.</title>
        <authorList>
            <person name="Toh H."/>
            <person name="Weiss B.L."/>
            <person name="Perkin S.A.H."/>
            <person name="Yamashita A."/>
            <person name="Oshima K."/>
            <person name="Hattori M."/>
            <person name="Aksoy S."/>
        </authorList>
    </citation>
    <scope>NUCLEOTIDE SEQUENCE [LARGE SCALE GENOMIC DNA]</scope>
    <source>
        <strain>morsitans</strain>
    </source>
</reference>
<organism>
    <name type="scientific">Sodalis glossinidius (strain morsitans)</name>
    <dbReference type="NCBI Taxonomy" id="343509"/>
    <lineage>
        <taxon>Bacteria</taxon>
        <taxon>Pseudomonadati</taxon>
        <taxon>Pseudomonadota</taxon>
        <taxon>Gammaproteobacteria</taxon>
        <taxon>Enterobacterales</taxon>
        <taxon>Bruguierivoracaceae</taxon>
        <taxon>Sodalis</taxon>
    </lineage>
</organism>
<proteinExistence type="inferred from homology"/>
<feature type="chain" id="PRO_1000059672" description="Chaperone protein DnaK">
    <location>
        <begin position="1"/>
        <end position="636"/>
    </location>
</feature>
<feature type="region of interest" description="Disordered" evidence="2">
    <location>
        <begin position="606"/>
        <end position="636"/>
    </location>
</feature>
<feature type="modified residue" description="Phosphothreonine; by autocatalysis" evidence="1">
    <location>
        <position position="199"/>
    </location>
</feature>
<gene>
    <name evidence="1" type="primary">dnaK</name>
    <name type="ordered locus">SG0409</name>
</gene>
<protein>
    <recommendedName>
        <fullName evidence="1">Chaperone protein DnaK</fullName>
    </recommendedName>
    <alternativeName>
        <fullName evidence="1">HSP70</fullName>
    </alternativeName>
    <alternativeName>
        <fullName evidence="1">Heat shock 70 kDa protein</fullName>
    </alternativeName>
    <alternativeName>
        <fullName evidence="1">Heat shock protein 70</fullName>
    </alternativeName>
</protein>
<accession>Q2NVZ1</accession>
<dbReference type="EMBL" id="AP008232">
    <property type="protein sequence ID" value="BAE73684.1"/>
    <property type="molecule type" value="Genomic_DNA"/>
</dbReference>
<dbReference type="RefSeq" id="WP_011410272.1">
    <property type="nucleotide sequence ID" value="NC_007712.1"/>
</dbReference>
<dbReference type="SMR" id="Q2NVZ1"/>
<dbReference type="STRING" id="343509.SG0409"/>
<dbReference type="KEGG" id="sgl:SG0409"/>
<dbReference type="eggNOG" id="COG0443">
    <property type="taxonomic scope" value="Bacteria"/>
</dbReference>
<dbReference type="HOGENOM" id="CLU_005965_2_1_6"/>
<dbReference type="OrthoDB" id="9766019at2"/>
<dbReference type="BioCyc" id="SGLO343509:SGP1_RS03795-MONOMER"/>
<dbReference type="Proteomes" id="UP000001932">
    <property type="component" value="Chromosome"/>
</dbReference>
<dbReference type="GO" id="GO:0005524">
    <property type="term" value="F:ATP binding"/>
    <property type="evidence" value="ECO:0007669"/>
    <property type="project" value="UniProtKB-UniRule"/>
</dbReference>
<dbReference type="GO" id="GO:0140662">
    <property type="term" value="F:ATP-dependent protein folding chaperone"/>
    <property type="evidence" value="ECO:0007669"/>
    <property type="project" value="InterPro"/>
</dbReference>
<dbReference type="GO" id="GO:0051082">
    <property type="term" value="F:unfolded protein binding"/>
    <property type="evidence" value="ECO:0007669"/>
    <property type="project" value="InterPro"/>
</dbReference>
<dbReference type="CDD" id="cd10234">
    <property type="entry name" value="ASKHA_NBD_HSP70_DnaK-like"/>
    <property type="match status" value="1"/>
</dbReference>
<dbReference type="FunFam" id="2.60.34.10:FF:000014">
    <property type="entry name" value="Chaperone protein DnaK HSP70"/>
    <property type="match status" value="1"/>
</dbReference>
<dbReference type="FunFam" id="3.30.30.30:FF:000003">
    <property type="entry name" value="Heat shock protein 9"/>
    <property type="match status" value="1"/>
</dbReference>
<dbReference type="FunFam" id="1.20.1270.10:FF:000001">
    <property type="entry name" value="Molecular chaperone DnaK"/>
    <property type="match status" value="1"/>
</dbReference>
<dbReference type="FunFam" id="3.30.420.40:FF:000004">
    <property type="entry name" value="Molecular chaperone DnaK"/>
    <property type="match status" value="1"/>
</dbReference>
<dbReference type="FunFam" id="3.90.640.10:FF:000003">
    <property type="entry name" value="Molecular chaperone DnaK"/>
    <property type="match status" value="1"/>
</dbReference>
<dbReference type="Gene3D" id="1.20.1270.10">
    <property type="match status" value="1"/>
</dbReference>
<dbReference type="Gene3D" id="3.30.420.40">
    <property type="match status" value="2"/>
</dbReference>
<dbReference type="Gene3D" id="3.90.640.10">
    <property type="entry name" value="Actin, Chain A, domain 4"/>
    <property type="match status" value="1"/>
</dbReference>
<dbReference type="Gene3D" id="2.60.34.10">
    <property type="entry name" value="Substrate Binding Domain Of DNAk, Chain A, domain 1"/>
    <property type="match status" value="1"/>
</dbReference>
<dbReference type="HAMAP" id="MF_00332">
    <property type="entry name" value="DnaK"/>
    <property type="match status" value="1"/>
</dbReference>
<dbReference type="InterPro" id="IPR043129">
    <property type="entry name" value="ATPase_NBD"/>
</dbReference>
<dbReference type="InterPro" id="IPR012725">
    <property type="entry name" value="Chaperone_DnaK"/>
</dbReference>
<dbReference type="InterPro" id="IPR018181">
    <property type="entry name" value="Heat_shock_70_CS"/>
</dbReference>
<dbReference type="InterPro" id="IPR029048">
    <property type="entry name" value="HSP70_C_sf"/>
</dbReference>
<dbReference type="InterPro" id="IPR029047">
    <property type="entry name" value="HSP70_peptide-bd_sf"/>
</dbReference>
<dbReference type="InterPro" id="IPR013126">
    <property type="entry name" value="Hsp_70_fam"/>
</dbReference>
<dbReference type="NCBIfam" id="NF001413">
    <property type="entry name" value="PRK00290.1"/>
    <property type="match status" value="1"/>
</dbReference>
<dbReference type="NCBIfam" id="NF003520">
    <property type="entry name" value="PRK05183.1"/>
    <property type="match status" value="1"/>
</dbReference>
<dbReference type="NCBIfam" id="TIGR02350">
    <property type="entry name" value="prok_dnaK"/>
    <property type="match status" value="1"/>
</dbReference>
<dbReference type="PANTHER" id="PTHR19375">
    <property type="entry name" value="HEAT SHOCK PROTEIN 70KDA"/>
    <property type="match status" value="1"/>
</dbReference>
<dbReference type="Pfam" id="PF00012">
    <property type="entry name" value="HSP70"/>
    <property type="match status" value="1"/>
</dbReference>
<dbReference type="PRINTS" id="PR00301">
    <property type="entry name" value="HEATSHOCK70"/>
</dbReference>
<dbReference type="SUPFAM" id="SSF53067">
    <property type="entry name" value="Actin-like ATPase domain"/>
    <property type="match status" value="2"/>
</dbReference>
<dbReference type="SUPFAM" id="SSF100934">
    <property type="entry name" value="Heat shock protein 70kD (HSP70), C-terminal subdomain"/>
    <property type="match status" value="1"/>
</dbReference>
<dbReference type="SUPFAM" id="SSF100920">
    <property type="entry name" value="Heat shock protein 70kD (HSP70), peptide-binding domain"/>
    <property type="match status" value="1"/>
</dbReference>
<dbReference type="PROSITE" id="PS00297">
    <property type="entry name" value="HSP70_1"/>
    <property type="match status" value="1"/>
</dbReference>
<dbReference type="PROSITE" id="PS00329">
    <property type="entry name" value="HSP70_2"/>
    <property type="match status" value="1"/>
</dbReference>
<dbReference type="PROSITE" id="PS01036">
    <property type="entry name" value="HSP70_3"/>
    <property type="match status" value="1"/>
</dbReference>
<sequence length="636" mass="68845">MGKIIGIDLGTTNSCIAIIEGSKPRVLENSEGDRTTPSIIAYTQDGEILVGQPAKRQSVTNPQNTLFAIKRLIGRRYQDEEVQRDVSIMPYKIVAADNGDAWLEVKGQKMAPPQISAEILKKMKKTAEDYLGEPVTEAVITVPAYFNDTQRQATKDAGRIAGLDVKRIINEPTAAALAYGLDKETGNRTIAVYDLGGGTFDISIIEIDDVDGEKTFEVLATNGDTHLGGEDFDSRLINYLVDEFKKDQGIDLRNDPLAMQRLKEAAEKAKIELSSAQQTDVNLPYITADGSGPKHMNLKVTRAKLESLVEELVNRTLEPLKVALKDAGLSVSDIKDVILVGGQTRMPLVQKKVTDFFGKEPRKDVNPDEAVAIGAAVQGGVLAGDVKDVLLLDVTPLSLGIETMGGVMTPLIAKNTTIPTKHSQVFSTAEDNQSAVTIHVLQGERKRSGDNKSLGQFNLDGISPAMRGTPQIEVTFDIDADGILHVSAKDKNSGREQKITIKASSGLNEEEIQKMVQEAEANAESDRKFEALVQTRNQADHLLHSTRKQLEDAGDKLPADDKTAIEDALKNLDTVLKGEDKADIEAKMQALIQVSGKLLEVAQQQAQAAGDGGADGSAKADDDVVDAEFEEVKDKK</sequence>